<dbReference type="EMBL" id="BX640423">
    <property type="protein sequence ID" value="CAE39789.1"/>
    <property type="molecule type" value="Genomic_DNA"/>
</dbReference>
<dbReference type="RefSeq" id="WP_003806923.1">
    <property type="nucleotide sequence ID" value="NC_002928.3"/>
</dbReference>
<dbReference type="SMR" id="Q7W2D8"/>
<dbReference type="GeneID" id="93206278"/>
<dbReference type="KEGG" id="bpa:BPP0048"/>
<dbReference type="HOGENOM" id="CLU_065898_2_2_4"/>
<dbReference type="Proteomes" id="UP000001421">
    <property type="component" value="Chromosome"/>
</dbReference>
<dbReference type="GO" id="GO:0015935">
    <property type="term" value="C:small ribosomal subunit"/>
    <property type="evidence" value="ECO:0007669"/>
    <property type="project" value="InterPro"/>
</dbReference>
<dbReference type="GO" id="GO:0019843">
    <property type="term" value="F:rRNA binding"/>
    <property type="evidence" value="ECO:0007669"/>
    <property type="project" value="UniProtKB-UniRule"/>
</dbReference>
<dbReference type="GO" id="GO:0003735">
    <property type="term" value="F:structural constituent of ribosome"/>
    <property type="evidence" value="ECO:0007669"/>
    <property type="project" value="InterPro"/>
</dbReference>
<dbReference type="GO" id="GO:0006412">
    <property type="term" value="P:translation"/>
    <property type="evidence" value="ECO:0007669"/>
    <property type="project" value="UniProtKB-UniRule"/>
</dbReference>
<dbReference type="FunFam" id="3.30.160.20:FF:000001">
    <property type="entry name" value="30S ribosomal protein S5"/>
    <property type="match status" value="1"/>
</dbReference>
<dbReference type="FunFam" id="3.30.230.10:FF:000002">
    <property type="entry name" value="30S ribosomal protein S5"/>
    <property type="match status" value="1"/>
</dbReference>
<dbReference type="Gene3D" id="3.30.160.20">
    <property type="match status" value="1"/>
</dbReference>
<dbReference type="Gene3D" id="3.30.230.10">
    <property type="match status" value="1"/>
</dbReference>
<dbReference type="HAMAP" id="MF_01307_B">
    <property type="entry name" value="Ribosomal_uS5_B"/>
    <property type="match status" value="1"/>
</dbReference>
<dbReference type="InterPro" id="IPR020568">
    <property type="entry name" value="Ribosomal_Su5_D2-typ_SF"/>
</dbReference>
<dbReference type="InterPro" id="IPR000851">
    <property type="entry name" value="Ribosomal_uS5"/>
</dbReference>
<dbReference type="InterPro" id="IPR005712">
    <property type="entry name" value="Ribosomal_uS5_bac-type"/>
</dbReference>
<dbReference type="InterPro" id="IPR005324">
    <property type="entry name" value="Ribosomal_uS5_C"/>
</dbReference>
<dbReference type="InterPro" id="IPR013810">
    <property type="entry name" value="Ribosomal_uS5_N"/>
</dbReference>
<dbReference type="InterPro" id="IPR018192">
    <property type="entry name" value="Ribosomal_uS5_N_CS"/>
</dbReference>
<dbReference type="InterPro" id="IPR014721">
    <property type="entry name" value="Ribsml_uS5_D2-typ_fold_subgr"/>
</dbReference>
<dbReference type="NCBIfam" id="TIGR01021">
    <property type="entry name" value="rpsE_bact"/>
    <property type="match status" value="1"/>
</dbReference>
<dbReference type="PANTHER" id="PTHR48277">
    <property type="entry name" value="MITOCHONDRIAL RIBOSOMAL PROTEIN S5"/>
    <property type="match status" value="1"/>
</dbReference>
<dbReference type="PANTHER" id="PTHR48277:SF1">
    <property type="entry name" value="MITOCHONDRIAL RIBOSOMAL PROTEIN S5"/>
    <property type="match status" value="1"/>
</dbReference>
<dbReference type="Pfam" id="PF00333">
    <property type="entry name" value="Ribosomal_S5"/>
    <property type="match status" value="1"/>
</dbReference>
<dbReference type="Pfam" id="PF03719">
    <property type="entry name" value="Ribosomal_S5_C"/>
    <property type="match status" value="1"/>
</dbReference>
<dbReference type="SUPFAM" id="SSF54768">
    <property type="entry name" value="dsRNA-binding domain-like"/>
    <property type="match status" value="1"/>
</dbReference>
<dbReference type="SUPFAM" id="SSF54211">
    <property type="entry name" value="Ribosomal protein S5 domain 2-like"/>
    <property type="match status" value="1"/>
</dbReference>
<dbReference type="PROSITE" id="PS00585">
    <property type="entry name" value="RIBOSOMAL_S5"/>
    <property type="match status" value="1"/>
</dbReference>
<dbReference type="PROSITE" id="PS50881">
    <property type="entry name" value="S5_DSRBD"/>
    <property type="match status" value="1"/>
</dbReference>
<name>RS5_BORPA</name>
<gene>
    <name evidence="1" type="primary">rpsE</name>
    <name type="ordered locus">BPP0048</name>
</gene>
<comment type="function">
    <text evidence="1">With S4 and S12 plays an important role in translational accuracy.</text>
</comment>
<comment type="function">
    <text evidence="1">Located at the back of the 30S subunit body where it stabilizes the conformation of the head with respect to the body.</text>
</comment>
<comment type="subunit">
    <text evidence="1">Part of the 30S ribosomal subunit. Contacts proteins S4 and S8.</text>
</comment>
<comment type="domain">
    <text>The N-terminal domain interacts with the head of the 30S subunit; the C-terminal domain interacts with the body and contacts protein S4. The interaction surface between S4 and S5 is involved in control of translational fidelity.</text>
</comment>
<comment type="similarity">
    <text evidence="1">Belongs to the universal ribosomal protein uS5 family.</text>
</comment>
<reference key="1">
    <citation type="journal article" date="2003" name="Nat. Genet.">
        <title>Comparative analysis of the genome sequences of Bordetella pertussis, Bordetella parapertussis and Bordetella bronchiseptica.</title>
        <authorList>
            <person name="Parkhill J."/>
            <person name="Sebaihia M."/>
            <person name="Preston A."/>
            <person name="Murphy L.D."/>
            <person name="Thomson N.R."/>
            <person name="Harris D.E."/>
            <person name="Holden M.T.G."/>
            <person name="Churcher C.M."/>
            <person name="Bentley S.D."/>
            <person name="Mungall K.L."/>
            <person name="Cerdeno-Tarraga A.-M."/>
            <person name="Temple L."/>
            <person name="James K.D."/>
            <person name="Harris B."/>
            <person name="Quail M.A."/>
            <person name="Achtman M."/>
            <person name="Atkin R."/>
            <person name="Baker S."/>
            <person name="Basham D."/>
            <person name="Bason N."/>
            <person name="Cherevach I."/>
            <person name="Chillingworth T."/>
            <person name="Collins M."/>
            <person name="Cronin A."/>
            <person name="Davis P."/>
            <person name="Doggett J."/>
            <person name="Feltwell T."/>
            <person name="Goble A."/>
            <person name="Hamlin N."/>
            <person name="Hauser H."/>
            <person name="Holroyd S."/>
            <person name="Jagels K."/>
            <person name="Leather S."/>
            <person name="Moule S."/>
            <person name="Norberczak H."/>
            <person name="O'Neil S."/>
            <person name="Ormond D."/>
            <person name="Price C."/>
            <person name="Rabbinowitsch E."/>
            <person name="Rutter S."/>
            <person name="Sanders M."/>
            <person name="Saunders D."/>
            <person name="Seeger K."/>
            <person name="Sharp S."/>
            <person name="Simmonds M."/>
            <person name="Skelton J."/>
            <person name="Squares R."/>
            <person name="Squares S."/>
            <person name="Stevens K."/>
            <person name="Unwin L."/>
            <person name="Whitehead S."/>
            <person name="Barrell B.G."/>
            <person name="Maskell D.J."/>
        </authorList>
    </citation>
    <scope>NUCLEOTIDE SEQUENCE [LARGE SCALE GENOMIC DNA]</scope>
    <source>
        <strain>12822 / ATCC BAA-587 / NCTC 13253</strain>
    </source>
</reference>
<keyword id="KW-0687">Ribonucleoprotein</keyword>
<keyword id="KW-0689">Ribosomal protein</keyword>
<keyword id="KW-0694">RNA-binding</keyword>
<keyword id="KW-0699">rRNA-binding</keyword>
<organism>
    <name type="scientific">Bordetella parapertussis (strain 12822 / ATCC BAA-587 / NCTC 13253)</name>
    <dbReference type="NCBI Taxonomy" id="257311"/>
    <lineage>
        <taxon>Bacteria</taxon>
        <taxon>Pseudomonadati</taxon>
        <taxon>Pseudomonadota</taxon>
        <taxon>Betaproteobacteria</taxon>
        <taxon>Burkholderiales</taxon>
        <taxon>Alcaligenaceae</taxon>
        <taxon>Bordetella</taxon>
    </lineage>
</organism>
<sequence length="174" mass="18114">MATKVQGKHAAEKENDDGLREKMIAVNRVSKVVKGGRTMSFAALSVVGDGDGRIGMGKGKAREVPVSVQKAMEQARRGMFKVALKNGTLHHTVVGKHGASTVLISPAAEGTGVIAGGPMRAIFEVMGVRNVVAKSLGSSNPYNLVRATLNGLRASLTPAEVAAKRGKSVEEILG</sequence>
<evidence type="ECO:0000255" key="1">
    <source>
        <dbReference type="HAMAP-Rule" id="MF_01307"/>
    </source>
</evidence>
<evidence type="ECO:0000305" key="2"/>
<proteinExistence type="inferred from homology"/>
<accession>Q7W2D8</accession>
<feature type="chain" id="PRO_0000131479" description="Small ribosomal subunit protein uS5">
    <location>
        <begin position="1"/>
        <end position="174"/>
    </location>
</feature>
<feature type="domain" description="S5 DRBM" evidence="1">
    <location>
        <begin position="19"/>
        <end position="82"/>
    </location>
</feature>
<protein>
    <recommendedName>
        <fullName evidence="1">Small ribosomal subunit protein uS5</fullName>
    </recommendedName>
    <alternativeName>
        <fullName evidence="2">30S ribosomal protein S5</fullName>
    </alternativeName>
</protein>